<reference key="1">
    <citation type="journal article" date="1995" name="Science">
        <title>The minimal gene complement of Mycoplasma genitalium.</title>
        <authorList>
            <person name="Fraser C.M."/>
            <person name="Gocayne J.D."/>
            <person name="White O."/>
            <person name="Adams M.D."/>
            <person name="Clayton R.A."/>
            <person name="Fleischmann R.D."/>
            <person name="Bult C.J."/>
            <person name="Kerlavage A.R."/>
            <person name="Sutton G.G."/>
            <person name="Kelley J.M."/>
            <person name="Fritchman J.L."/>
            <person name="Weidman J.F."/>
            <person name="Small K.V."/>
            <person name="Sandusky M."/>
            <person name="Fuhrmann J.L."/>
            <person name="Nguyen D.T."/>
            <person name="Utterback T.R."/>
            <person name="Saudek D.M."/>
            <person name="Phillips C.A."/>
            <person name="Merrick J.M."/>
            <person name="Tomb J.-F."/>
            <person name="Dougherty B.A."/>
            <person name="Bott K.F."/>
            <person name="Hu P.-C."/>
            <person name="Lucier T.S."/>
            <person name="Peterson S.N."/>
            <person name="Smith H.O."/>
            <person name="Hutchison C.A. III"/>
            <person name="Venter J.C."/>
        </authorList>
    </citation>
    <scope>NUCLEOTIDE SEQUENCE [LARGE SCALE GENOMIC DNA]</scope>
    <source>
        <strain>ATCC 33530 / DSM 19775 / NCTC 10195 / G37</strain>
    </source>
</reference>
<reference key="2">
    <citation type="journal article" date="1993" name="J. Bacteriol.">
        <title>A survey of the Mycoplasma genitalium genome by using random sequencing.</title>
        <authorList>
            <person name="Peterson S.N."/>
            <person name="Hu P.-C."/>
            <person name="Bott K.F."/>
            <person name="Hutchison C.A. III"/>
        </authorList>
    </citation>
    <scope>NUCLEOTIDE SEQUENCE [GENOMIC DNA] OF 133-241</scope>
    <source>
        <strain>ATCC 33530 / DSM 19775 / NCTC 10195 / G37</strain>
    </source>
</reference>
<keyword id="KW-0328">Glycosyltransferase</keyword>
<keyword id="KW-1185">Reference proteome</keyword>
<keyword id="KW-0808">Transferase</keyword>
<comment type="similarity">
    <text evidence="1">Belongs to the glycosyltransferase 2 family.</text>
</comment>
<name>Y060_MYCGE</name>
<organism>
    <name type="scientific">Mycoplasma genitalium (strain ATCC 33530 / DSM 19775 / NCTC 10195 / G37)</name>
    <name type="common">Mycoplasmoides genitalium</name>
    <dbReference type="NCBI Taxonomy" id="243273"/>
    <lineage>
        <taxon>Bacteria</taxon>
        <taxon>Bacillati</taxon>
        <taxon>Mycoplasmatota</taxon>
        <taxon>Mycoplasmoidales</taxon>
        <taxon>Mycoplasmoidaceae</taxon>
        <taxon>Mycoplasmoides</taxon>
    </lineage>
</organism>
<proteinExistence type="inferred from homology"/>
<feature type="chain" id="PRO_0000059243" description="Uncharacterized glycosyltransferase MG060">
    <location>
        <begin position="1"/>
        <end position="297"/>
    </location>
</feature>
<dbReference type="EC" id="2.4.-.-"/>
<dbReference type="EMBL" id="L43967">
    <property type="protein sequence ID" value="AAC71277.1"/>
    <property type="molecule type" value="Genomic_DNA"/>
</dbReference>
<dbReference type="EMBL" id="U02262">
    <property type="protein sequence ID" value="AAD12528.1"/>
    <property type="molecule type" value="Genomic_DNA"/>
</dbReference>
<dbReference type="PIR" id="F64206">
    <property type="entry name" value="F64206"/>
</dbReference>
<dbReference type="RefSeq" id="WP_010869310.1">
    <property type="nucleotide sequence ID" value="NC_000908.2"/>
</dbReference>
<dbReference type="SMR" id="P47306"/>
<dbReference type="STRING" id="243273.MG_060"/>
<dbReference type="CAZy" id="GT2">
    <property type="family name" value="Glycosyltransferase Family 2"/>
</dbReference>
<dbReference type="GeneID" id="88282177"/>
<dbReference type="KEGG" id="mge:MG_060"/>
<dbReference type="eggNOG" id="COG0463">
    <property type="taxonomic scope" value="Bacteria"/>
</dbReference>
<dbReference type="HOGENOM" id="CLU_079042_0_0_14"/>
<dbReference type="InParanoid" id="P47306"/>
<dbReference type="OrthoDB" id="396512at2"/>
<dbReference type="BioCyc" id="MGEN243273:G1GJ2-63-MONOMER"/>
<dbReference type="Proteomes" id="UP000000807">
    <property type="component" value="Chromosome"/>
</dbReference>
<dbReference type="GO" id="GO:0016757">
    <property type="term" value="F:glycosyltransferase activity"/>
    <property type="evidence" value="ECO:0000318"/>
    <property type="project" value="GO_Central"/>
</dbReference>
<dbReference type="GO" id="GO:0016758">
    <property type="term" value="F:hexosyltransferase activity"/>
    <property type="evidence" value="ECO:0007669"/>
    <property type="project" value="UniProtKB-ARBA"/>
</dbReference>
<dbReference type="GO" id="GO:0009058">
    <property type="term" value="P:biosynthetic process"/>
    <property type="evidence" value="ECO:0007669"/>
    <property type="project" value="UniProtKB-ARBA"/>
</dbReference>
<dbReference type="CDD" id="cd00761">
    <property type="entry name" value="Glyco_tranf_GTA_type"/>
    <property type="match status" value="1"/>
</dbReference>
<dbReference type="FunFam" id="3.90.550.10:FF:000251">
    <property type="entry name" value="Beta-1,3-glucosyltransferase"/>
    <property type="match status" value="1"/>
</dbReference>
<dbReference type="Gene3D" id="3.90.550.10">
    <property type="entry name" value="Spore Coat Polysaccharide Biosynthesis Protein SpsA, Chain A"/>
    <property type="match status" value="1"/>
</dbReference>
<dbReference type="InterPro" id="IPR001173">
    <property type="entry name" value="Glyco_trans_2-like"/>
</dbReference>
<dbReference type="InterPro" id="IPR029044">
    <property type="entry name" value="Nucleotide-diphossugar_trans"/>
</dbReference>
<dbReference type="PANTHER" id="PTHR22916">
    <property type="entry name" value="GLYCOSYLTRANSFERASE"/>
    <property type="match status" value="1"/>
</dbReference>
<dbReference type="PANTHER" id="PTHR22916:SF3">
    <property type="entry name" value="UDP-GLCNAC:BETAGAL BETA-1,3-N-ACETYLGLUCOSAMINYLTRANSFERASE-LIKE PROTEIN 1"/>
    <property type="match status" value="1"/>
</dbReference>
<dbReference type="Pfam" id="PF00535">
    <property type="entry name" value="Glycos_transf_2"/>
    <property type="match status" value="1"/>
</dbReference>
<dbReference type="SUPFAM" id="SSF53448">
    <property type="entry name" value="Nucleotide-diphospho-sugar transferases"/>
    <property type="match status" value="1"/>
</dbReference>
<protein>
    <recommendedName>
        <fullName>Uncharacterized glycosyltransferase MG060</fullName>
        <ecNumber>2.4.-.-</ecNumber>
    </recommendedName>
</protein>
<accession>P47306</accession>
<gene>
    <name type="ordered locus">MG060</name>
</gene>
<sequence length="297" mass="35228">MKLSVIIPTYNCASFIEKAINSIVKNRPNDLEIEVLIIDDGSIDNTNKVIKKIQDQINNLTLQYFYKSNGNWGSVINYVRNNKLAKGEWVTVLDSDDIFSKKTISIFQKYAQKQRYDAIIFDYYKCWKKFLWKIPTYARFRKEIKGELKKQTPFCIPLAKFFKNEVFYQLPKLRENVGFQDAIYTMHALQIANNVFHVSKAGGYYFFKRVGNSMSIPWHSSRFDIEVQICKDLIENNAQEIALVHLLRLKFRNLVDDKKIKFTVKRDFCFSGFSWYSRLILSLMYNFWLKRYFNSSE</sequence>
<evidence type="ECO:0000305" key="1"/>